<sequence>MVAIAPNPHSGQSVKTIRENLLTPRFYTTDFEQAAKLDLSRQQEQLEAMLAEMRADYNRHHFVRDDSFKGTWDLLDAQTRKAFIDYLERSCVSEFSGFLLFKELSRKLKDRNPLLAEIFHLMARDEARHAGFLNKAMMDFGHAMDLGYLSKTRTYTFFPLPWVLYTVYLSEKIGYWRYIIIYRHLEKHPEHSFYPLFNYFERWCQDENRHGDIFKALIHSQPQLIQGWGAKLWMRFFLLTVFATHTLTVHERAKFYEALGLDATAFDREVIAKTNETAARTFSVVLNVDHPEFYSRLQRCVEISNKLQAIEATHQPKWLKALRKLPHQLAIAGHLLRIYLLPPVNAQQEWGTVH</sequence>
<reference key="1">
    <citation type="journal article" date="2002" name="DNA Res.">
        <title>Complete genome structure of the thermophilic cyanobacterium Thermosynechococcus elongatus BP-1.</title>
        <authorList>
            <person name="Nakamura Y."/>
            <person name="Kaneko T."/>
            <person name="Sato S."/>
            <person name="Ikeuchi M."/>
            <person name="Katoh H."/>
            <person name="Sasamoto S."/>
            <person name="Watanabe A."/>
            <person name="Iriguchi M."/>
            <person name="Kawashima K."/>
            <person name="Kimura T."/>
            <person name="Kishida Y."/>
            <person name="Kiyokawa C."/>
            <person name="Kohara M."/>
            <person name="Matsumoto M."/>
            <person name="Matsuno A."/>
            <person name="Nakazaki N."/>
            <person name="Shimpo S."/>
            <person name="Sugimoto M."/>
            <person name="Takeuchi C."/>
            <person name="Yamada M."/>
            <person name="Tabata S."/>
        </authorList>
    </citation>
    <scope>NUCLEOTIDE SEQUENCE [LARGE SCALE GENOMIC DNA]</scope>
    <source>
        <strain>NIES-2133 / IAM M-273 / BP-1</strain>
    </source>
</reference>
<comment type="function">
    <text evidence="1">Catalyzes the formation of the isocyclic ring in chlorophyll biosynthesis. Mediates the cyclase reaction, which results in the formation of divinylprotochlorophyllide (Pchlide) characteristic of all chlorophylls from magnesium-protoporphyrin IX 13-monomethyl ester (MgPMME).</text>
</comment>
<comment type="catalytic activity">
    <reaction evidence="1">
        <text>Mg-protoporphyrin IX 13-monomethyl ester + 3 NADPH + 3 O2 + 2 H(+) = 3,8-divinyl protochlorophyllide a + 3 NADP(+) + 5 H2O</text>
        <dbReference type="Rhea" id="RHEA:33235"/>
        <dbReference type="ChEBI" id="CHEBI:15377"/>
        <dbReference type="ChEBI" id="CHEBI:15378"/>
        <dbReference type="ChEBI" id="CHEBI:15379"/>
        <dbReference type="ChEBI" id="CHEBI:57783"/>
        <dbReference type="ChEBI" id="CHEBI:58349"/>
        <dbReference type="ChEBI" id="CHEBI:58632"/>
        <dbReference type="ChEBI" id="CHEBI:60491"/>
        <dbReference type="EC" id="1.14.13.81"/>
    </reaction>
</comment>
<comment type="cofactor">
    <cofactor evidence="1">
        <name>Fe cation</name>
        <dbReference type="ChEBI" id="CHEBI:24875"/>
    </cofactor>
</comment>
<comment type="pathway">
    <text evidence="1">Porphyrin-containing compound metabolism; chlorophyll biosynthesis (light-independent).</text>
</comment>
<comment type="similarity">
    <text evidence="1">Belongs to the AcsF family.</text>
</comment>
<accession>Q8DI68</accession>
<organism>
    <name type="scientific">Thermosynechococcus vestitus (strain NIES-2133 / IAM M-273 / BP-1)</name>
    <dbReference type="NCBI Taxonomy" id="197221"/>
    <lineage>
        <taxon>Bacteria</taxon>
        <taxon>Bacillati</taxon>
        <taxon>Cyanobacteriota</taxon>
        <taxon>Cyanophyceae</taxon>
        <taxon>Acaryochloridales</taxon>
        <taxon>Thermosynechococcaceae</taxon>
        <taxon>Thermosynechococcus</taxon>
    </lineage>
</organism>
<proteinExistence type="inferred from homology"/>
<gene>
    <name evidence="1" type="primary">acsF2</name>
    <name type="ordered locus">tlr1722</name>
</gene>
<dbReference type="EC" id="1.14.13.81" evidence="1"/>
<dbReference type="EMBL" id="BA000039">
    <property type="protein sequence ID" value="BAC09274.1"/>
    <property type="molecule type" value="Genomic_DNA"/>
</dbReference>
<dbReference type="RefSeq" id="NP_682512.1">
    <property type="nucleotide sequence ID" value="NC_004113.1"/>
</dbReference>
<dbReference type="RefSeq" id="WP_011057559.1">
    <property type="nucleotide sequence ID" value="NC_004113.1"/>
</dbReference>
<dbReference type="STRING" id="197221.gene:10748326"/>
<dbReference type="EnsemblBacteria" id="BAC09274">
    <property type="protein sequence ID" value="BAC09274"/>
    <property type="gene ID" value="BAC09274"/>
</dbReference>
<dbReference type="KEGG" id="tel:tlr1722"/>
<dbReference type="PATRIC" id="fig|197221.4.peg.1803"/>
<dbReference type="eggNOG" id="COG1633">
    <property type="taxonomic scope" value="Bacteria"/>
</dbReference>
<dbReference type="UniPathway" id="UPA00670"/>
<dbReference type="Proteomes" id="UP000000440">
    <property type="component" value="Chromosome"/>
</dbReference>
<dbReference type="GO" id="GO:0005506">
    <property type="term" value="F:iron ion binding"/>
    <property type="evidence" value="ECO:0007669"/>
    <property type="project" value="UniProtKB-UniRule"/>
</dbReference>
<dbReference type="GO" id="GO:0048529">
    <property type="term" value="F:magnesium-protoporphyrin IX monomethyl ester (oxidative) cyclase activity"/>
    <property type="evidence" value="ECO:0007669"/>
    <property type="project" value="UniProtKB-UniRule"/>
</dbReference>
<dbReference type="GO" id="GO:0036068">
    <property type="term" value="P:light-independent chlorophyll biosynthetic process"/>
    <property type="evidence" value="ECO:0007669"/>
    <property type="project" value="UniProtKB-UniRule"/>
</dbReference>
<dbReference type="GO" id="GO:0015979">
    <property type="term" value="P:photosynthesis"/>
    <property type="evidence" value="ECO:0007669"/>
    <property type="project" value="UniProtKB-UniRule"/>
</dbReference>
<dbReference type="CDD" id="cd01047">
    <property type="entry name" value="ACSF"/>
    <property type="match status" value="1"/>
</dbReference>
<dbReference type="HAMAP" id="MF_01840">
    <property type="entry name" value="AcsF"/>
    <property type="match status" value="1"/>
</dbReference>
<dbReference type="InterPro" id="IPR008434">
    <property type="entry name" value="AcsF"/>
</dbReference>
<dbReference type="InterPro" id="IPR009078">
    <property type="entry name" value="Ferritin-like_SF"/>
</dbReference>
<dbReference type="InterPro" id="IPR003251">
    <property type="entry name" value="Rr_diiron-bd_dom"/>
</dbReference>
<dbReference type="NCBIfam" id="TIGR02029">
    <property type="entry name" value="AcsF"/>
    <property type="match status" value="1"/>
</dbReference>
<dbReference type="NCBIfam" id="NF010172">
    <property type="entry name" value="PRK13654.1"/>
    <property type="match status" value="1"/>
</dbReference>
<dbReference type="PANTHER" id="PTHR31053">
    <property type="entry name" value="MAGNESIUM-PROTOPORPHYRIN IX MONOMETHYL ESTER [OXIDATIVE] CYCLASE, CHLOROPLASTIC"/>
    <property type="match status" value="1"/>
</dbReference>
<dbReference type="PANTHER" id="PTHR31053:SF2">
    <property type="entry name" value="MAGNESIUM-PROTOPORPHYRIN IX MONOMETHYL ESTER [OXIDATIVE] CYCLASE, CHLOROPLASTIC"/>
    <property type="match status" value="1"/>
</dbReference>
<dbReference type="Pfam" id="PF02915">
    <property type="entry name" value="Rubrerythrin"/>
    <property type="match status" value="1"/>
</dbReference>
<dbReference type="SUPFAM" id="SSF47240">
    <property type="entry name" value="Ferritin-like"/>
    <property type="match status" value="1"/>
</dbReference>
<evidence type="ECO:0000255" key="1">
    <source>
        <dbReference type="HAMAP-Rule" id="MF_01840"/>
    </source>
</evidence>
<name>ACSF2_THEVB</name>
<feature type="chain" id="PRO_0000217536" description="Magnesium-protoporphyrin IX monomethyl ester [oxidative] cyclase 2">
    <location>
        <begin position="1"/>
        <end position="354"/>
    </location>
</feature>
<keyword id="KW-0149">Chlorophyll biosynthesis</keyword>
<keyword id="KW-0408">Iron</keyword>
<keyword id="KW-0479">Metal-binding</keyword>
<keyword id="KW-0521">NADP</keyword>
<keyword id="KW-0560">Oxidoreductase</keyword>
<keyword id="KW-0602">Photosynthesis</keyword>
<keyword id="KW-1185">Reference proteome</keyword>
<protein>
    <recommendedName>
        <fullName evidence="1">Magnesium-protoporphyrin IX monomethyl ester [oxidative] cyclase 2</fullName>
        <shortName evidence="1">Mg-protoporphyrin IX monomethyl ester oxidative cyclase 2</shortName>
        <ecNumber evidence="1">1.14.13.81</ecNumber>
    </recommendedName>
</protein>